<gene>
    <name evidence="1" type="primary">PB1</name>
</gene>
<keyword id="KW-1262">Eukaryotic host gene expression shutoff by virus</keyword>
<keyword id="KW-1191">Eukaryotic host transcription shutoff by virus</keyword>
<keyword id="KW-1035">Host cytoplasm</keyword>
<keyword id="KW-1190">Host gene expression shutoff by virus</keyword>
<keyword id="KW-1048">Host nucleus</keyword>
<keyword id="KW-0945">Host-virus interaction</keyword>
<keyword id="KW-1104">Inhibition of host RNA polymerase II by virus</keyword>
<keyword id="KW-0547">Nucleotide-binding</keyword>
<keyword id="KW-0548">Nucleotidyltransferase</keyword>
<keyword id="KW-0597">Phosphoprotein</keyword>
<keyword id="KW-0696">RNA-directed RNA polymerase</keyword>
<keyword id="KW-0808">Transferase</keyword>
<keyword id="KW-0693">Viral RNA replication</keyword>
<keyword id="KW-1195">Viral transcription</keyword>
<evidence type="ECO:0000255" key="1">
    <source>
        <dbReference type="HAMAP-Rule" id="MF_04065"/>
    </source>
</evidence>
<evidence type="ECO:0000256" key="2">
    <source>
        <dbReference type="SAM" id="MobiDB-lite"/>
    </source>
</evidence>
<sequence length="757" mass="86483">MDVNPTLLFLKVPAQNAISTTFPYTGDPPYSHGTGTGYTMDTVNRTHQYSEKGKWTTNTETGAPQLNPIDGPLPEDNEPSGYAQTDCVLEAMAFLEESHPGIFENSCLETMEVVQQTRVDRLTQGRQTYDWTLNRNQPAATALANTIEVFRSNGLTANESGRLIDFLKDVMESMDKEEMEITTHFQRKRRVRDNMTKKMVTQRTIGKKKQRVNKRSYLIRALTLNTMTKDAERGKLKRRAIATPGMQIRGFVYFVETLARSICEKLEQSGLPVGGNEKKAKLANVVRKMMTNSQDTELSFTITGDNTKWNENQNPRMFLAMITYITKNQPEWFRNILSIAPIMFSNKMARLGKGYMFESKRMKLRTQIPAEMLASIDLKYFNESTRKKIEKIRPLLIDGTASLSPGMMMGMFNMLSTVLGVSILNLGQKKYTKTTYWWDGLQSSDDFALIVNAPNHEGIQAGVDRFYRTCKLVGINMSKKKSYINRTGTFEFTSFFYRYGFVANFSMELPSFGVSGINESADMSIGVTVIKNNMINNDLGPATAQMALQLFIKDYRYTYRCHRGDTQIQTRRSFELKKLWEQTRSKAGLLVSDGGPNLYNIRNLHIPEVCLKWELMDEDYQGRLCNPLNPFVSHKEIESVNNAVVMPAHGPAKSMEYDAVATTHSWIPKRNRSILNTSQRGILEDEQMYQKCCNLFEKFFPSSSYRRPVGISSMVEAMVSRARIDARIDFESGRIKKEEFSEIMKICSTIEELRRQK</sequence>
<reference key="1">
    <citation type="submission" date="2006-04" db="EMBL/GenBank/DDBJ databases">
        <title>The NIAID influenza genome sequencing project.</title>
        <authorList>
            <person name="Spiro D."/>
            <person name="Ghedin E."/>
            <person name="Sengamalay N."/>
            <person name="Halpin R."/>
            <person name="Boyne A."/>
            <person name="Zaborsky J."/>
            <person name="Feldblyum T."/>
            <person name="Subbu V."/>
            <person name="Sparenborg J."/>
            <person name="Shumway M."/>
            <person name="Sitz J."/>
            <person name="Katzel D."/>
            <person name="Koo H."/>
            <person name="Salzberg S.L."/>
            <person name="Griesemer S."/>
            <person name="St George K."/>
            <person name="Bennett R."/>
            <person name="Taylor J."/>
            <person name="Bennink J.R."/>
            <person name="Yewdell J.W."/>
            <person name="Bao Y."/>
            <person name="Bolotov P."/>
            <person name="Dernovoy D."/>
            <person name="Kiryutin B."/>
            <person name="Lipman D.J."/>
            <person name="Tatusova T."/>
        </authorList>
    </citation>
    <scope>NUCLEOTIDE SEQUENCE [GENOMIC RNA]</scope>
</reference>
<protein>
    <recommendedName>
        <fullName evidence="1">RNA-directed RNA polymerase catalytic subunit</fullName>
        <ecNumber evidence="1">2.7.7.48</ecNumber>
    </recommendedName>
    <alternativeName>
        <fullName evidence="1">Polymerase basic protein 1</fullName>
        <shortName evidence="1">PB1</shortName>
    </alternativeName>
    <alternativeName>
        <fullName evidence="1">RNA-directed RNA polymerase subunit P1</fullName>
    </alternativeName>
</protein>
<comment type="function">
    <text evidence="1">RNA-dependent RNA polymerase which is responsible for replication and transcription of virus RNA segments. The transcription of viral mRNAs occurs by a unique mechanism called cap-snatching. 5' methylated caps of cellular mRNAs are cleaved after 10-13 nucleotides by PA. In turn, these short capped RNAs are used as primers by PB1 for transcription of viral mRNAs. During virus replication, PB1 initiates RNA synthesis and copy vRNA into complementary RNA (cRNA) which in turn serves as a template for the production of more vRNAs.</text>
</comment>
<comment type="catalytic activity">
    <reaction evidence="1">
        <text>RNA(n) + a ribonucleoside 5'-triphosphate = RNA(n+1) + diphosphate</text>
        <dbReference type="Rhea" id="RHEA:21248"/>
        <dbReference type="Rhea" id="RHEA-COMP:14527"/>
        <dbReference type="Rhea" id="RHEA-COMP:17342"/>
        <dbReference type="ChEBI" id="CHEBI:33019"/>
        <dbReference type="ChEBI" id="CHEBI:61557"/>
        <dbReference type="ChEBI" id="CHEBI:140395"/>
        <dbReference type="EC" id="2.7.7.48"/>
    </reaction>
</comment>
<comment type="subunit">
    <text evidence="1">Influenza RNA polymerase is composed of three subunits: PB1, PB2 and PA. Interacts (via N-terminus) with PA (via C-terminus). Interacts (via C-terminus) with PB2 (via N-terminus); this interaction is essential for transcription initiation.</text>
</comment>
<comment type="subcellular location">
    <subcellularLocation>
        <location evidence="1">Host nucleus</location>
    </subcellularLocation>
    <subcellularLocation>
        <location evidence="1">Host cytoplasm</location>
    </subcellularLocation>
</comment>
<comment type="PTM">
    <text evidence="1">Phosphorylated by host PRKCA.</text>
</comment>
<comment type="similarity">
    <text evidence="1">Belongs to the influenza viruses polymerase PB1 family.</text>
</comment>
<organism>
    <name type="scientific">Influenza A virus (strain A/Port Chalmers/1/1973 H3N2)</name>
    <dbReference type="NCBI Taxonomy" id="385624"/>
    <lineage>
        <taxon>Viruses</taxon>
        <taxon>Riboviria</taxon>
        <taxon>Orthornavirae</taxon>
        <taxon>Negarnaviricota</taxon>
        <taxon>Polyploviricotina</taxon>
        <taxon>Insthoviricetes</taxon>
        <taxon>Articulavirales</taxon>
        <taxon>Orthomyxoviridae</taxon>
        <taxon>Alphainfluenzavirus</taxon>
        <taxon>Alphainfluenzavirus influenzae</taxon>
        <taxon>Influenza A virus</taxon>
    </lineage>
</organism>
<feature type="chain" id="PRO_0000279609" description="RNA-directed RNA polymerase catalytic subunit">
    <location>
        <begin position="1"/>
        <end position="757"/>
    </location>
</feature>
<feature type="domain" description="RdRp catalytic" evidence="1">
    <location>
        <begin position="286"/>
        <end position="483"/>
    </location>
</feature>
<feature type="region of interest" description="Disordered" evidence="2">
    <location>
        <begin position="50"/>
        <end position="82"/>
    </location>
</feature>
<feature type="region of interest" description="Promoter-binding site" evidence="1">
    <location>
        <begin position="249"/>
        <end position="256"/>
    </location>
</feature>
<feature type="short sequence motif" description="Nuclear localization signal" evidence="1">
    <location>
        <begin position="187"/>
        <end position="195"/>
    </location>
</feature>
<feature type="short sequence motif" description="Nuclear localization signal" evidence="1">
    <location>
        <begin position="203"/>
        <end position="216"/>
    </location>
</feature>
<feature type="compositionally biased region" description="Polar residues" evidence="2">
    <location>
        <begin position="55"/>
        <end position="64"/>
    </location>
</feature>
<proteinExistence type="inferred from homology"/>
<organismHost>
    <name type="scientific">Aves</name>
    <dbReference type="NCBI Taxonomy" id="8782"/>
</organismHost>
<organismHost>
    <name type="scientific">Cetacea</name>
    <name type="common">whales</name>
    <dbReference type="NCBI Taxonomy" id="9721"/>
</organismHost>
<organismHost>
    <name type="scientific">Homo sapiens</name>
    <name type="common">Human</name>
    <dbReference type="NCBI Taxonomy" id="9606"/>
</organismHost>
<organismHost>
    <name type="scientific">Phocidae</name>
    <name type="common">true seals</name>
    <dbReference type="NCBI Taxonomy" id="9709"/>
</organismHost>
<organismHost>
    <name type="scientific">Sus scrofa</name>
    <name type="common">Pig</name>
    <dbReference type="NCBI Taxonomy" id="9823"/>
</organismHost>
<accession>Q1PUD1</accession>
<dbReference type="EC" id="2.7.7.48" evidence="1"/>
<dbReference type="EMBL" id="CY009354">
    <property type="protein sequence ID" value="ABE12579.1"/>
    <property type="molecule type" value="Genomic_RNA"/>
</dbReference>
<dbReference type="SMR" id="Q1PUD1"/>
<dbReference type="Proteomes" id="UP000133870">
    <property type="component" value="Genome"/>
</dbReference>
<dbReference type="GO" id="GO:0030430">
    <property type="term" value="C:host cell cytoplasm"/>
    <property type="evidence" value="ECO:0007669"/>
    <property type="project" value="UniProtKB-SubCell"/>
</dbReference>
<dbReference type="GO" id="GO:0042025">
    <property type="term" value="C:host cell nucleus"/>
    <property type="evidence" value="ECO:0007669"/>
    <property type="project" value="UniProtKB-SubCell"/>
</dbReference>
<dbReference type="GO" id="GO:0000166">
    <property type="term" value="F:nucleotide binding"/>
    <property type="evidence" value="ECO:0007669"/>
    <property type="project" value="UniProtKB-UniRule"/>
</dbReference>
<dbReference type="GO" id="GO:0003723">
    <property type="term" value="F:RNA binding"/>
    <property type="evidence" value="ECO:0007669"/>
    <property type="project" value="InterPro"/>
</dbReference>
<dbReference type="GO" id="GO:0003968">
    <property type="term" value="F:RNA-directed RNA polymerase activity"/>
    <property type="evidence" value="ECO:0007669"/>
    <property type="project" value="UniProtKB-UniRule"/>
</dbReference>
<dbReference type="GO" id="GO:0006351">
    <property type="term" value="P:DNA-templated transcription"/>
    <property type="evidence" value="ECO:0007669"/>
    <property type="project" value="UniProtKB-UniRule"/>
</dbReference>
<dbReference type="GO" id="GO:0039657">
    <property type="term" value="P:symbiont-mediated suppression of host gene expression"/>
    <property type="evidence" value="ECO:0007669"/>
    <property type="project" value="UniProtKB-KW"/>
</dbReference>
<dbReference type="GO" id="GO:0039523">
    <property type="term" value="P:symbiont-mediated suppression of host mRNA transcription via inhibition of RNA polymerase II activity"/>
    <property type="evidence" value="ECO:0007669"/>
    <property type="project" value="UniProtKB-UniRule"/>
</dbReference>
<dbReference type="GO" id="GO:0039694">
    <property type="term" value="P:viral RNA genome replication"/>
    <property type="evidence" value="ECO:0007669"/>
    <property type="project" value="UniProtKB-UniRule"/>
</dbReference>
<dbReference type="GO" id="GO:0019083">
    <property type="term" value="P:viral transcription"/>
    <property type="evidence" value="ECO:0007669"/>
    <property type="project" value="UniProtKB-KW"/>
</dbReference>
<dbReference type="Gene3D" id="6.10.140.720">
    <property type="match status" value="1"/>
</dbReference>
<dbReference type="HAMAP" id="MF_04065">
    <property type="entry name" value="INFV_RDRP"/>
    <property type="match status" value="1"/>
</dbReference>
<dbReference type="InterPro" id="IPR007099">
    <property type="entry name" value="RNA-dir_pol_NSvirus"/>
</dbReference>
<dbReference type="InterPro" id="IPR001407">
    <property type="entry name" value="RNA_pol_PB1_influenza"/>
</dbReference>
<dbReference type="Pfam" id="PF00602">
    <property type="entry name" value="Flu_PB1"/>
    <property type="match status" value="1"/>
</dbReference>
<dbReference type="PIRSF" id="PIRSF000827">
    <property type="entry name" value="RdRPol_OMV"/>
    <property type="match status" value="1"/>
</dbReference>
<dbReference type="PROSITE" id="PS50525">
    <property type="entry name" value="RDRP_SSRNA_NEG_SEG"/>
    <property type="match status" value="1"/>
</dbReference>
<name>RDRP_I73A5</name>